<protein>
    <recommendedName>
        <fullName>UPF0324 membrane protein Cj0999c</fullName>
    </recommendedName>
</protein>
<evidence type="ECO:0000255" key="1"/>
<evidence type="ECO:0000305" key="2"/>
<keyword id="KW-1003">Cell membrane</keyword>
<keyword id="KW-0472">Membrane</keyword>
<keyword id="KW-1185">Reference proteome</keyword>
<keyword id="KW-0812">Transmembrane</keyword>
<keyword id="KW-1133">Transmembrane helix</keyword>
<feature type="chain" id="PRO_0000157403" description="UPF0324 membrane protein Cj0999c">
    <location>
        <begin position="1"/>
        <end position="365"/>
    </location>
</feature>
<feature type="transmembrane region" description="Helical" evidence="1">
    <location>
        <begin position="12"/>
        <end position="34"/>
    </location>
</feature>
<feature type="transmembrane region" description="Helical" evidence="1">
    <location>
        <begin position="44"/>
        <end position="63"/>
    </location>
</feature>
<feature type="transmembrane region" description="Helical" evidence="1">
    <location>
        <begin position="83"/>
        <end position="100"/>
    </location>
</feature>
<feature type="transmembrane region" description="Helical" evidence="1">
    <location>
        <begin position="105"/>
        <end position="127"/>
    </location>
</feature>
<feature type="transmembrane region" description="Helical" evidence="1">
    <location>
        <begin position="134"/>
        <end position="153"/>
    </location>
</feature>
<feature type="transmembrane region" description="Helical" evidence="1">
    <location>
        <begin position="163"/>
        <end position="185"/>
    </location>
</feature>
<feature type="transmembrane region" description="Helical" evidence="1">
    <location>
        <begin position="197"/>
        <end position="219"/>
    </location>
</feature>
<feature type="transmembrane region" description="Helical" evidence="1">
    <location>
        <begin position="234"/>
        <end position="256"/>
    </location>
</feature>
<feature type="transmembrane region" description="Helical" evidence="1">
    <location>
        <begin position="269"/>
        <end position="288"/>
    </location>
</feature>
<feature type="transmembrane region" description="Helical" evidence="1">
    <location>
        <begin position="303"/>
        <end position="325"/>
    </location>
</feature>
<feature type="transmembrane region" description="Helical" evidence="1">
    <location>
        <begin position="338"/>
        <end position="360"/>
    </location>
</feature>
<accession>Q9PNU1</accession>
<accession>Q0P9Q3</accession>
<gene>
    <name type="ordered locus">Cj0999c</name>
</gene>
<organism>
    <name type="scientific">Campylobacter jejuni subsp. jejuni serotype O:2 (strain ATCC 700819 / NCTC 11168)</name>
    <dbReference type="NCBI Taxonomy" id="192222"/>
    <lineage>
        <taxon>Bacteria</taxon>
        <taxon>Pseudomonadati</taxon>
        <taxon>Campylobacterota</taxon>
        <taxon>Epsilonproteobacteria</taxon>
        <taxon>Campylobacterales</taxon>
        <taxon>Campylobacteraceae</taxon>
        <taxon>Campylobacter</taxon>
    </lineage>
</organism>
<proteinExistence type="inferred from homology"/>
<name>Y999_CAMJE</name>
<comment type="subcellular location">
    <subcellularLocation>
        <location evidence="2">Cell membrane</location>
        <topology evidence="2">Multi-pass membrane protein</topology>
    </subcellularLocation>
</comment>
<comment type="similarity">
    <text evidence="2">Belongs to the UPF0324 family.</text>
</comment>
<sequence>MKTSFLAHSVAIVRSNFKGLLFTACIVIFAMYLSSVQSIKDTTHLAATAFAIIIGVLLSPWFFKYQHHFQAGVHFSAKKLLRLGIVLYGFNITLTELLSVGLKGFLLSAIVIFFVFIIALFVGTKIFKLDKETSMLVGAGSAICGAAAVLALESSLKSDPFKGILAVGTVVIFGLVFMFLYPIAFSLNLFPFFDQNAMGVFMGATLHEVANVAGAAEMAKDMAGFEQGASNVAVIIKMMRVILLVPFLLIVTYFFAKNQHSSSGKTAKSITIPYFAFAFLGMIVLNTYLASKESILGIATSDIISLGKTLCTLCIVFAMAALGLQIDFKKFLKSGSRVFGLAFVLGLVLIFGGYFLTLAFKGILW</sequence>
<reference key="1">
    <citation type="journal article" date="2000" name="Nature">
        <title>The genome sequence of the food-borne pathogen Campylobacter jejuni reveals hypervariable sequences.</title>
        <authorList>
            <person name="Parkhill J."/>
            <person name="Wren B.W."/>
            <person name="Mungall K.L."/>
            <person name="Ketley J.M."/>
            <person name="Churcher C.M."/>
            <person name="Basham D."/>
            <person name="Chillingworth T."/>
            <person name="Davies R.M."/>
            <person name="Feltwell T."/>
            <person name="Holroyd S."/>
            <person name="Jagels K."/>
            <person name="Karlyshev A.V."/>
            <person name="Moule S."/>
            <person name="Pallen M.J."/>
            <person name="Penn C.W."/>
            <person name="Quail M.A."/>
            <person name="Rajandream M.A."/>
            <person name="Rutherford K.M."/>
            <person name="van Vliet A.H.M."/>
            <person name="Whitehead S."/>
            <person name="Barrell B.G."/>
        </authorList>
    </citation>
    <scope>NUCLEOTIDE SEQUENCE [LARGE SCALE GENOMIC DNA]</scope>
    <source>
        <strain>ATCC 700819 / NCTC 11168</strain>
    </source>
</reference>
<dbReference type="EMBL" id="AL111168">
    <property type="protein sequence ID" value="CAL35117.1"/>
    <property type="molecule type" value="Genomic_DNA"/>
</dbReference>
<dbReference type="PIR" id="D81375">
    <property type="entry name" value="D81375"/>
</dbReference>
<dbReference type="RefSeq" id="WP_002853043.1">
    <property type="nucleotide sequence ID" value="NZ_SZUC01000001.1"/>
</dbReference>
<dbReference type="RefSeq" id="YP_002344394.1">
    <property type="nucleotide sequence ID" value="NC_002163.1"/>
</dbReference>
<dbReference type="IntAct" id="Q9PNU1">
    <property type="interactions" value="3"/>
</dbReference>
<dbReference type="STRING" id="192222.Cj0999c"/>
<dbReference type="PaxDb" id="192222-Cj0999c"/>
<dbReference type="EnsemblBacteria" id="CAL35117">
    <property type="protein sequence ID" value="CAL35117"/>
    <property type="gene ID" value="Cj0999c"/>
</dbReference>
<dbReference type="GeneID" id="905290"/>
<dbReference type="KEGG" id="cje:Cj0999c"/>
<dbReference type="PATRIC" id="fig|192222.6.peg.981"/>
<dbReference type="eggNOG" id="COG2855">
    <property type="taxonomic scope" value="Bacteria"/>
</dbReference>
<dbReference type="HOGENOM" id="CLU_033541_0_0_7"/>
<dbReference type="OrthoDB" id="9805703at2"/>
<dbReference type="Proteomes" id="UP000000799">
    <property type="component" value="Chromosome"/>
</dbReference>
<dbReference type="GO" id="GO:0005886">
    <property type="term" value="C:plasma membrane"/>
    <property type="evidence" value="ECO:0007669"/>
    <property type="project" value="UniProtKB-SubCell"/>
</dbReference>
<dbReference type="InterPro" id="IPR018383">
    <property type="entry name" value="UPF0324_pro"/>
</dbReference>
<dbReference type="PANTHER" id="PTHR30106">
    <property type="entry name" value="INNER MEMBRANE PROTEIN YEIH-RELATED"/>
    <property type="match status" value="1"/>
</dbReference>
<dbReference type="PANTHER" id="PTHR30106:SF2">
    <property type="entry name" value="UPF0324 INNER MEMBRANE PROTEIN YEIH"/>
    <property type="match status" value="1"/>
</dbReference>
<dbReference type="Pfam" id="PF03601">
    <property type="entry name" value="Cons_hypoth698"/>
    <property type="match status" value="1"/>
</dbReference>